<evidence type="ECO:0000255" key="1">
    <source>
        <dbReference type="HAMAP-Rule" id="MF_00203"/>
    </source>
</evidence>
<gene>
    <name evidence="1" type="primary">uvrC</name>
    <name type="ordered locus">lpl2570</name>
</gene>
<sequence>MNDLQLSAELALFLTKLPSEPGIYRMLDEEGTVLYVGKAANLKKRVNSYFSKQNTGVKTRALVSQIKSIEISVTRSETEALLLESNLIKALRPKYNVLLRDDKSYPYIHLSNHPDFPRVELYRSKKKPPSGNFFGPYPGVAAVRETIVTIQKIFKIRNCRDSYFKARSRPCLQYQIKRCTAPCVHYISPENYKLSVEDAIRFLQGKCQIILDELAERMKNAVSQLNFEEAAVLRDQIKNLRLIQEQQGVVQLRGDADVIAIEVRPGFACIQCVTIREGQVLNSQSFFPTVPYAVLDEELDANSLWQQTFEAFIGFYYLDTSERIPDLIITNQSITESRSLEYILSQRRGKSCKIQVNPRGVKSRWMDFAVNNLRISVAEYVSKHSTIRSRYQALRQLLALDKNIERMECFDISHTQGEATVASCVVFDTEGPRPSEYRRFNIEGITPGDDYAAMEQAVTRRFKRLIGAQLLPDVLIIDGGKGQVSIVKRVLTSLGVEDITLLGVSKGPSRKAGWEKLILVNENREFVLPEDSKALHLLQHIRDEAHRFAITAHRKKRQKTRVESTLESIEGVGAKRRQALLQRFGGLRELAKASLEEICKVQGISEQLAKRIYEHFHP</sequence>
<feature type="chain" id="PRO_0000227441" description="UvrABC system protein C">
    <location>
        <begin position="1"/>
        <end position="618"/>
    </location>
</feature>
<feature type="domain" description="GIY-YIG" evidence="1">
    <location>
        <begin position="19"/>
        <end position="97"/>
    </location>
</feature>
<feature type="domain" description="UVR" evidence="1">
    <location>
        <begin position="208"/>
        <end position="243"/>
    </location>
</feature>
<organism>
    <name type="scientific">Legionella pneumophila (strain Lens)</name>
    <dbReference type="NCBI Taxonomy" id="297245"/>
    <lineage>
        <taxon>Bacteria</taxon>
        <taxon>Pseudomonadati</taxon>
        <taxon>Pseudomonadota</taxon>
        <taxon>Gammaproteobacteria</taxon>
        <taxon>Legionellales</taxon>
        <taxon>Legionellaceae</taxon>
        <taxon>Legionella</taxon>
    </lineage>
</organism>
<reference key="1">
    <citation type="journal article" date="2004" name="Nat. Genet.">
        <title>Evidence in the Legionella pneumophila genome for exploitation of host cell functions and high genome plasticity.</title>
        <authorList>
            <person name="Cazalet C."/>
            <person name="Rusniok C."/>
            <person name="Brueggemann H."/>
            <person name="Zidane N."/>
            <person name="Magnier A."/>
            <person name="Ma L."/>
            <person name="Tichit M."/>
            <person name="Jarraud S."/>
            <person name="Bouchier C."/>
            <person name="Vandenesch F."/>
            <person name="Kunst F."/>
            <person name="Etienne J."/>
            <person name="Glaser P."/>
            <person name="Buchrieser C."/>
        </authorList>
    </citation>
    <scope>NUCLEOTIDE SEQUENCE [LARGE SCALE GENOMIC DNA]</scope>
    <source>
        <strain>Lens</strain>
    </source>
</reference>
<proteinExistence type="inferred from homology"/>
<protein>
    <recommendedName>
        <fullName evidence="1">UvrABC system protein C</fullName>
        <shortName evidence="1">Protein UvrC</shortName>
    </recommendedName>
    <alternativeName>
        <fullName evidence="1">Excinuclease ABC subunit C</fullName>
    </alternativeName>
</protein>
<comment type="function">
    <text evidence="1">The UvrABC repair system catalyzes the recognition and processing of DNA lesions. UvrC both incises the 5' and 3' sides of the lesion. The N-terminal half is responsible for the 3' incision and the C-terminal half is responsible for the 5' incision.</text>
</comment>
<comment type="subunit">
    <text evidence="1">Interacts with UvrB in an incision complex.</text>
</comment>
<comment type="subcellular location">
    <subcellularLocation>
        <location evidence="1">Cytoplasm</location>
    </subcellularLocation>
</comment>
<comment type="similarity">
    <text evidence="1">Belongs to the UvrC family.</text>
</comment>
<name>UVRC_LEGPL</name>
<accession>Q5WTF5</accession>
<dbReference type="EMBL" id="CR628337">
    <property type="protein sequence ID" value="CAH16811.1"/>
    <property type="molecule type" value="Genomic_DNA"/>
</dbReference>
<dbReference type="RefSeq" id="WP_011216517.1">
    <property type="nucleotide sequence ID" value="NC_006369.1"/>
</dbReference>
<dbReference type="SMR" id="Q5WTF5"/>
<dbReference type="KEGG" id="lpf:lpl2570"/>
<dbReference type="LegioList" id="lpl2570"/>
<dbReference type="HOGENOM" id="CLU_014841_3_0_6"/>
<dbReference type="Proteomes" id="UP000002517">
    <property type="component" value="Chromosome"/>
</dbReference>
<dbReference type="GO" id="GO:0005737">
    <property type="term" value="C:cytoplasm"/>
    <property type="evidence" value="ECO:0007669"/>
    <property type="project" value="UniProtKB-SubCell"/>
</dbReference>
<dbReference type="GO" id="GO:0009380">
    <property type="term" value="C:excinuclease repair complex"/>
    <property type="evidence" value="ECO:0007669"/>
    <property type="project" value="InterPro"/>
</dbReference>
<dbReference type="GO" id="GO:0003677">
    <property type="term" value="F:DNA binding"/>
    <property type="evidence" value="ECO:0007669"/>
    <property type="project" value="UniProtKB-UniRule"/>
</dbReference>
<dbReference type="GO" id="GO:0009381">
    <property type="term" value="F:excinuclease ABC activity"/>
    <property type="evidence" value="ECO:0007669"/>
    <property type="project" value="UniProtKB-UniRule"/>
</dbReference>
<dbReference type="GO" id="GO:0006289">
    <property type="term" value="P:nucleotide-excision repair"/>
    <property type="evidence" value="ECO:0007669"/>
    <property type="project" value="UniProtKB-UniRule"/>
</dbReference>
<dbReference type="GO" id="GO:0009432">
    <property type="term" value="P:SOS response"/>
    <property type="evidence" value="ECO:0007669"/>
    <property type="project" value="UniProtKB-UniRule"/>
</dbReference>
<dbReference type="CDD" id="cd10434">
    <property type="entry name" value="GIY-YIG_UvrC_Cho"/>
    <property type="match status" value="1"/>
</dbReference>
<dbReference type="FunFam" id="1.10.150.20:FF:000005">
    <property type="entry name" value="UvrABC system protein C"/>
    <property type="match status" value="1"/>
</dbReference>
<dbReference type="FunFam" id="3.30.420.340:FF:000001">
    <property type="entry name" value="UvrABC system protein C"/>
    <property type="match status" value="1"/>
</dbReference>
<dbReference type="FunFam" id="3.40.1440.10:FF:000001">
    <property type="entry name" value="UvrABC system protein C"/>
    <property type="match status" value="1"/>
</dbReference>
<dbReference type="Gene3D" id="1.10.150.20">
    <property type="entry name" value="5' to 3' exonuclease, C-terminal subdomain"/>
    <property type="match status" value="1"/>
</dbReference>
<dbReference type="Gene3D" id="3.40.1440.10">
    <property type="entry name" value="GIY-YIG endonuclease"/>
    <property type="match status" value="1"/>
</dbReference>
<dbReference type="Gene3D" id="4.10.860.10">
    <property type="entry name" value="UVR domain"/>
    <property type="match status" value="1"/>
</dbReference>
<dbReference type="Gene3D" id="3.30.420.340">
    <property type="entry name" value="UvrC, RNAse H endonuclease domain"/>
    <property type="match status" value="1"/>
</dbReference>
<dbReference type="HAMAP" id="MF_00203">
    <property type="entry name" value="UvrC"/>
    <property type="match status" value="1"/>
</dbReference>
<dbReference type="InterPro" id="IPR000305">
    <property type="entry name" value="GIY-YIG_endonuc"/>
</dbReference>
<dbReference type="InterPro" id="IPR035901">
    <property type="entry name" value="GIY-YIG_endonuc_sf"/>
</dbReference>
<dbReference type="InterPro" id="IPR047296">
    <property type="entry name" value="GIY-YIG_UvrC_Cho"/>
</dbReference>
<dbReference type="InterPro" id="IPR003583">
    <property type="entry name" value="Hlx-hairpin-Hlx_DNA-bd_motif"/>
</dbReference>
<dbReference type="InterPro" id="IPR010994">
    <property type="entry name" value="RuvA_2-like"/>
</dbReference>
<dbReference type="InterPro" id="IPR001943">
    <property type="entry name" value="UVR_dom"/>
</dbReference>
<dbReference type="InterPro" id="IPR036876">
    <property type="entry name" value="UVR_dom_sf"/>
</dbReference>
<dbReference type="InterPro" id="IPR050066">
    <property type="entry name" value="UvrABC_protein_C"/>
</dbReference>
<dbReference type="InterPro" id="IPR004791">
    <property type="entry name" value="UvrC"/>
</dbReference>
<dbReference type="InterPro" id="IPR001162">
    <property type="entry name" value="UvrC_RNase_H_dom"/>
</dbReference>
<dbReference type="InterPro" id="IPR038476">
    <property type="entry name" value="UvrC_RNase_H_dom_sf"/>
</dbReference>
<dbReference type="NCBIfam" id="NF001824">
    <property type="entry name" value="PRK00558.1-5"/>
    <property type="match status" value="1"/>
</dbReference>
<dbReference type="NCBIfam" id="TIGR00194">
    <property type="entry name" value="uvrC"/>
    <property type="match status" value="1"/>
</dbReference>
<dbReference type="PANTHER" id="PTHR30562:SF1">
    <property type="entry name" value="UVRABC SYSTEM PROTEIN C"/>
    <property type="match status" value="1"/>
</dbReference>
<dbReference type="PANTHER" id="PTHR30562">
    <property type="entry name" value="UVRC/OXIDOREDUCTASE"/>
    <property type="match status" value="1"/>
</dbReference>
<dbReference type="Pfam" id="PF01541">
    <property type="entry name" value="GIY-YIG"/>
    <property type="match status" value="1"/>
</dbReference>
<dbReference type="Pfam" id="PF14520">
    <property type="entry name" value="HHH_5"/>
    <property type="match status" value="1"/>
</dbReference>
<dbReference type="Pfam" id="PF02151">
    <property type="entry name" value="UVR"/>
    <property type="match status" value="1"/>
</dbReference>
<dbReference type="Pfam" id="PF22920">
    <property type="entry name" value="UvrC_RNaseH"/>
    <property type="match status" value="1"/>
</dbReference>
<dbReference type="Pfam" id="PF08459">
    <property type="entry name" value="UvrC_RNaseH_dom"/>
    <property type="match status" value="1"/>
</dbReference>
<dbReference type="SMART" id="SM00465">
    <property type="entry name" value="GIYc"/>
    <property type="match status" value="1"/>
</dbReference>
<dbReference type="SMART" id="SM00278">
    <property type="entry name" value="HhH1"/>
    <property type="match status" value="2"/>
</dbReference>
<dbReference type="SUPFAM" id="SSF46600">
    <property type="entry name" value="C-terminal UvrC-binding domain of UvrB"/>
    <property type="match status" value="1"/>
</dbReference>
<dbReference type="SUPFAM" id="SSF82771">
    <property type="entry name" value="GIY-YIG endonuclease"/>
    <property type="match status" value="1"/>
</dbReference>
<dbReference type="SUPFAM" id="SSF47781">
    <property type="entry name" value="RuvA domain 2-like"/>
    <property type="match status" value="1"/>
</dbReference>
<dbReference type="PROSITE" id="PS50164">
    <property type="entry name" value="GIY_YIG"/>
    <property type="match status" value="1"/>
</dbReference>
<dbReference type="PROSITE" id="PS50151">
    <property type="entry name" value="UVR"/>
    <property type="match status" value="1"/>
</dbReference>
<dbReference type="PROSITE" id="PS50165">
    <property type="entry name" value="UVRC"/>
    <property type="match status" value="1"/>
</dbReference>
<keyword id="KW-0963">Cytoplasm</keyword>
<keyword id="KW-0227">DNA damage</keyword>
<keyword id="KW-0228">DNA excision</keyword>
<keyword id="KW-0234">DNA repair</keyword>
<keyword id="KW-0267">Excision nuclease</keyword>
<keyword id="KW-0742">SOS response</keyword>